<proteinExistence type="evidence at protein level"/>
<dbReference type="EMBL" id="L36815">
    <property type="protein sequence ID" value="AAA66189.1"/>
    <property type="molecule type" value="Genomic_DNA"/>
</dbReference>
<dbReference type="EMBL" id="Z73533">
    <property type="protein sequence ID" value="CAA97884.1"/>
    <property type="molecule type" value="Genomic_DNA"/>
</dbReference>
<dbReference type="EMBL" id="AY692914">
    <property type="protein sequence ID" value="AAT92933.1"/>
    <property type="molecule type" value="Genomic_DNA"/>
</dbReference>
<dbReference type="EMBL" id="BK006949">
    <property type="protein sequence ID" value="DAA11257.1"/>
    <property type="molecule type" value="Genomic_DNA"/>
</dbReference>
<dbReference type="PIR" id="A56344">
    <property type="entry name" value="A56344"/>
</dbReference>
<dbReference type="RefSeq" id="NP_015148.1">
    <property type="nucleotide sequence ID" value="NM_001183991.1"/>
</dbReference>
<dbReference type="SMR" id="P41817"/>
<dbReference type="BioGRID" id="36006">
    <property type="interactions" value="135"/>
</dbReference>
<dbReference type="DIP" id="DIP-7745N"/>
<dbReference type="FunCoup" id="P41817">
    <property type="interactions" value="1157"/>
</dbReference>
<dbReference type="IntAct" id="P41817">
    <property type="interactions" value="2"/>
</dbReference>
<dbReference type="MINT" id="P41817"/>
<dbReference type="STRING" id="4932.YPL177C"/>
<dbReference type="GlyGen" id="P41817">
    <property type="glycosylation" value="1 site"/>
</dbReference>
<dbReference type="iPTMnet" id="P41817"/>
<dbReference type="PaxDb" id="4932-YPL177C"/>
<dbReference type="PeptideAtlas" id="P41817"/>
<dbReference type="EnsemblFungi" id="YPL177C_mRNA">
    <property type="protein sequence ID" value="YPL177C"/>
    <property type="gene ID" value="YPL177C"/>
</dbReference>
<dbReference type="GeneID" id="855926"/>
<dbReference type="KEGG" id="sce:YPL177C"/>
<dbReference type="AGR" id="SGD:S000006098"/>
<dbReference type="SGD" id="S000006098">
    <property type="gene designation" value="CUP9"/>
</dbReference>
<dbReference type="VEuPathDB" id="FungiDB:YPL177C"/>
<dbReference type="eggNOG" id="KOG0773">
    <property type="taxonomic scope" value="Eukaryota"/>
</dbReference>
<dbReference type="GeneTree" id="ENSGT00940000176464"/>
<dbReference type="HOGENOM" id="CLU_068284_0_0_1"/>
<dbReference type="InParanoid" id="P41817"/>
<dbReference type="OMA" id="YDATSTC"/>
<dbReference type="OrthoDB" id="10056939at2759"/>
<dbReference type="BioCyc" id="YEAST:G3O-34072-MONOMER"/>
<dbReference type="BioGRID-ORCS" id="855926">
    <property type="hits" value="0 hits in 13 CRISPR screens"/>
</dbReference>
<dbReference type="PRO" id="PR:P41817"/>
<dbReference type="Proteomes" id="UP000002311">
    <property type="component" value="Chromosome XVI"/>
</dbReference>
<dbReference type="RNAct" id="P41817">
    <property type="molecule type" value="protein"/>
</dbReference>
<dbReference type="GO" id="GO:0005634">
    <property type="term" value="C:nucleus"/>
    <property type="evidence" value="ECO:0000305"/>
    <property type="project" value="SGD"/>
</dbReference>
<dbReference type="GO" id="GO:0000978">
    <property type="term" value="F:RNA polymerase II cis-regulatory region sequence-specific DNA binding"/>
    <property type="evidence" value="ECO:0000314"/>
    <property type="project" value="SGD"/>
</dbReference>
<dbReference type="GO" id="GO:0061629">
    <property type="term" value="F:RNA polymerase II-specific DNA-binding transcription factor binding"/>
    <property type="evidence" value="ECO:0000353"/>
    <property type="project" value="SGD"/>
</dbReference>
<dbReference type="GO" id="GO:0043565">
    <property type="term" value="F:sequence-specific DNA binding"/>
    <property type="evidence" value="ECO:0007005"/>
    <property type="project" value="SGD"/>
</dbReference>
<dbReference type="GO" id="GO:2000879">
    <property type="term" value="P:negative regulation of dipeptide transport"/>
    <property type="evidence" value="ECO:0000315"/>
    <property type="project" value="SGD"/>
</dbReference>
<dbReference type="GO" id="GO:2000877">
    <property type="term" value="P:negative regulation of oligopeptide transport"/>
    <property type="evidence" value="ECO:0000315"/>
    <property type="project" value="SGD"/>
</dbReference>
<dbReference type="GO" id="GO:0000122">
    <property type="term" value="P:negative regulation of transcription by RNA polymerase II"/>
    <property type="evidence" value="ECO:0000315"/>
    <property type="project" value="SGD"/>
</dbReference>
<dbReference type="CDD" id="cd00086">
    <property type="entry name" value="homeodomain"/>
    <property type="match status" value="1"/>
</dbReference>
<dbReference type="FunFam" id="1.10.10.60:FF:000482">
    <property type="entry name" value="Homeobox protein TOS8"/>
    <property type="match status" value="1"/>
</dbReference>
<dbReference type="Gene3D" id="1.10.10.60">
    <property type="entry name" value="Homeodomain-like"/>
    <property type="match status" value="1"/>
</dbReference>
<dbReference type="InterPro" id="IPR001356">
    <property type="entry name" value="HD"/>
</dbReference>
<dbReference type="InterPro" id="IPR009057">
    <property type="entry name" value="Homeodomain-like_sf"/>
</dbReference>
<dbReference type="InterPro" id="IPR008422">
    <property type="entry name" value="KN_HD"/>
</dbReference>
<dbReference type="InterPro" id="IPR050224">
    <property type="entry name" value="TALE_homeobox"/>
</dbReference>
<dbReference type="PANTHER" id="PTHR11850">
    <property type="entry name" value="HOMEOBOX PROTEIN TRANSCRIPTION FACTORS"/>
    <property type="match status" value="1"/>
</dbReference>
<dbReference type="Pfam" id="PF05920">
    <property type="entry name" value="Homeobox_KN"/>
    <property type="match status" value="1"/>
</dbReference>
<dbReference type="SMART" id="SM00389">
    <property type="entry name" value="HOX"/>
    <property type="match status" value="1"/>
</dbReference>
<dbReference type="SUPFAM" id="SSF46689">
    <property type="entry name" value="Homeodomain-like"/>
    <property type="match status" value="1"/>
</dbReference>
<dbReference type="PROSITE" id="PS00027">
    <property type="entry name" value="HOMEOBOX_1"/>
    <property type="match status" value="1"/>
</dbReference>
<dbReference type="PROSITE" id="PS50071">
    <property type="entry name" value="HOMEOBOX_2"/>
    <property type="match status" value="1"/>
</dbReference>
<accession>P41817</accession>
<accession>D6W3J1</accession>
<evidence type="ECO:0000255" key="1">
    <source>
        <dbReference type="PROSITE-ProRule" id="PRU00108"/>
    </source>
</evidence>
<evidence type="ECO:0000256" key="2">
    <source>
        <dbReference type="SAM" id="MobiDB-lite"/>
    </source>
</evidence>
<evidence type="ECO:0000269" key="3">
    <source>
    </source>
</evidence>
<evidence type="ECO:0000305" key="4"/>
<gene>
    <name type="primary">CUP9</name>
    <name type="ordered locus">YPL177C</name>
</gene>
<comment type="function">
    <text>Probable DNA-binding protein which plays a role in protecting yeast cells against copper toxicity. May regulate the expression of important copper homeostatic genes.</text>
</comment>
<comment type="subcellular location">
    <subcellularLocation>
        <location evidence="4">Nucleus</location>
    </subcellularLocation>
</comment>
<comment type="miscellaneous">
    <text evidence="3">Present with 521 molecules/cell in log phase SD medium.</text>
</comment>
<comment type="similarity">
    <text evidence="4">Belongs to the TALE/CUP9 homeobox family.</text>
</comment>
<sequence>MNYNCEIQNRNSKNVDNQVSLPPIQVLFNSIEKRSMPELAFSNIEYSHGNLRSSTEEQNYPAPVLLPQHHSIAYPAINSGGTSTTATPTASTVETSKTSSSAMDTQSQYGSSKKSKSASDDAKPCYKSAPIYEIINKEKDAGAQYNRPFSDFVESKSRRKQNSGRRSNLPKETVQILNTWLLNHLNNPYPTQQEKRELLIKTGLTKIQLSNWFINVRRRKIFSDYYTLVNSIPNDNANNTPVERVQNVSAYHNTLSATNNTMYDATSTCSTDYELSKRFAHAPVTRRKKLIDRLEELKKLSNPDMN</sequence>
<organism>
    <name type="scientific">Saccharomyces cerevisiae (strain ATCC 204508 / S288c)</name>
    <name type="common">Baker's yeast</name>
    <dbReference type="NCBI Taxonomy" id="559292"/>
    <lineage>
        <taxon>Eukaryota</taxon>
        <taxon>Fungi</taxon>
        <taxon>Dikarya</taxon>
        <taxon>Ascomycota</taxon>
        <taxon>Saccharomycotina</taxon>
        <taxon>Saccharomycetes</taxon>
        <taxon>Saccharomycetales</taxon>
        <taxon>Saccharomycetaceae</taxon>
        <taxon>Saccharomyces</taxon>
    </lineage>
</organism>
<reference key="1">
    <citation type="journal article" date="1994" name="Mol. Cell. Biol.">
        <title>Identification and analysis of a Saccharomyces cerevisiae copper homeostasis gene encoding a homeodomain protein.</title>
        <authorList>
            <person name="Knight S.A.B."/>
            <person name="Tamai K.T."/>
            <person name="Kosman D.J."/>
            <person name="Thiele D.J."/>
        </authorList>
    </citation>
    <scope>NUCLEOTIDE SEQUENCE [GENOMIC DNA]</scope>
    <source>
        <strain>DTY86</strain>
    </source>
</reference>
<reference key="2">
    <citation type="journal article" date="1997" name="Nature">
        <title>The nucleotide sequence of Saccharomyces cerevisiae chromosome XVI.</title>
        <authorList>
            <person name="Bussey H."/>
            <person name="Storms R.K."/>
            <person name="Ahmed A."/>
            <person name="Albermann K."/>
            <person name="Allen E."/>
            <person name="Ansorge W."/>
            <person name="Araujo R."/>
            <person name="Aparicio A."/>
            <person name="Barrell B.G."/>
            <person name="Badcock K."/>
            <person name="Benes V."/>
            <person name="Botstein D."/>
            <person name="Bowman S."/>
            <person name="Brueckner M."/>
            <person name="Carpenter J."/>
            <person name="Cherry J.M."/>
            <person name="Chung E."/>
            <person name="Churcher C.M."/>
            <person name="Coster F."/>
            <person name="Davis K."/>
            <person name="Davis R.W."/>
            <person name="Dietrich F.S."/>
            <person name="Delius H."/>
            <person name="DiPaolo T."/>
            <person name="Dubois E."/>
            <person name="Duesterhoeft A."/>
            <person name="Duncan M."/>
            <person name="Floeth M."/>
            <person name="Fortin N."/>
            <person name="Friesen J.D."/>
            <person name="Fritz C."/>
            <person name="Goffeau A."/>
            <person name="Hall J."/>
            <person name="Hebling U."/>
            <person name="Heumann K."/>
            <person name="Hilbert H."/>
            <person name="Hillier L.W."/>
            <person name="Hunicke-Smith S."/>
            <person name="Hyman R.W."/>
            <person name="Johnston M."/>
            <person name="Kalman S."/>
            <person name="Kleine K."/>
            <person name="Komp C."/>
            <person name="Kurdi O."/>
            <person name="Lashkari D."/>
            <person name="Lew H."/>
            <person name="Lin A."/>
            <person name="Lin D."/>
            <person name="Louis E.J."/>
            <person name="Marathe R."/>
            <person name="Messenguy F."/>
            <person name="Mewes H.-W."/>
            <person name="Mirtipati S."/>
            <person name="Moestl D."/>
            <person name="Mueller-Auer S."/>
            <person name="Namath A."/>
            <person name="Nentwich U."/>
            <person name="Oefner P."/>
            <person name="Pearson D."/>
            <person name="Petel F.X."/>
            <person name="Pohl T.M."/>
            <person name="Purnelle B."/>
            <person name="Rajandream M.A."/>
            <person name="Rechmann S."/>
            <person name="Rieger M."/>
            <person name="Riles L."/>
            <person name="Roberts D."/>
            <person name="Schaefer M."/>
            <person name="Scharfe M."/>
            <person name="Scherens B."/>
            <person name="Schramm S."/>
            <person name="Schroeder M."/>
            <person name="Sdicu A.-M."/>
            <person name="Tettelin H."/>
            <person name="Urrestarazu L.A."/>
            <person name="Ushinsky S."/>
            <person name="Vierendeels F."/>
            <person name="Vissers S."/>
            <person name="Voss H."/>
            <person name="Walsh S.V."/>
            <person name="Wambutt R."/>
            <person name="Wang Y."/>
            <person name="Wedler E."/>
            <person name="Wedler H."/>
            <person name="Winnett E."/>
            <person name="Zhong W.-W."/>
            <person name="Zollner A."/>
            <person name="Vo D.H."/>
            <person name="Hani J."/>
        </authorList>
    </citation>
    <scope>NUCLEOTIDE SEQUENCE [LARGE SCALE GENOMIC DNA]</scope>
    <source>
        <strain>ATCC 204508 / S288c</strain>
    </source>
</reference>
<reference key="3">
    <citation type="journal article" date="2014" name="G3 (Bethesda)">
        <title>The reference genome sequence of Saccharomyces cerevisiae: Then and now.</title>
        <authorList>
            <person name="Engel S.R."/>
            <person name="Dietrich F.S."/>
            <person name="Fisk D.G."/>
            <person name="Binkley G."/>
            <person name="Balakrishnan R."/>
            <person name="Costanzo M.C."/>
            <person name="Dwight S.S."/>
            <person name="Hitz B.C."/>
            <person name="Karra K."/>
            <person name="Nash R.S."/>
            <person name="Weng S."/>
            <person name="Wong E.D."/>
            <person name="Lloyd P."/>
            <person name="Skrzypek M.S."/>
            <person name="Miyasato S.R."/>
            <person name="Simison M."/>
            <person name="Cherry J.M."/>
        </authorList>
    </citation>
    <scope>GENOME REANNOTATION</scope>
    <source>
        <strain>ATCC 204508 / S288c</strain>
    </source>
</reference>
<reference key="4">
    <citation type="journal article" date="2007" name="Genome Res.">
        <title>Approaching a complete repository of sequence-verified protein-encoding clones for Saccharomyces cerevisiae.</title>
        <authorList>
            <person name="Hu Y."/>
            <person name="Rolfs A."/>
            <person name="Bhullar B."/>
            <person name="Murthy T.V.S."/>
            <person name="Zhu C."/>
            <person name="Berger M.F."/>
            <person name="Camargo A.A."/>
            <person name="Kelley F."/>
            <person name="McCarron S."/>
            <person name="Jepson D."/>
            <person name="Richardson A."/>
            <person name="Raphael J."/>
            <person name="Moreira D."/>
            <person name="Taycher E."/>
            <person name="Zuo D."/>
            <person name="Mohr S."/>
            <person name="Kane M.F."/>
            <person name="Williamson J."/>
            <person name="Simpson A.J.G."/>
            <person name="Bulyk M.L."/>
            <person name="Harlow E."/>
            <person name="Marsischky G."/>
            <person name="Kolodner R.D."/>
            <person name="LaBaer J."/>
        </authorList>
    </citation>
    <scope>NUCLEOTIDE SEQUENCE [GENOMIC DNA]</scope>
</reference>
<reference key="5">
    <citation type="journal article" date="2003" name="Nature">
        <title>Global analysis of protein expression in yeast.</title>
        <authorList>
            <person name="Ghaemmaghami S."/>
            <person name="Huh W.-K."/>
            <person name="Bower K."/>
            <person name="Howson R.W."/>
            <person name="Belle A."/>
            <person name="Dephoure N."/>
            <person name="O'Shea E.K."/>
            <person name="Weissman J.S."/>
        </authorList>
    </citation>
    <scope>LEVEL OF PROTEIN EXPRESSION [LARGE SCALE ANALYSIS]</scope>
</reference>
<reference key="6">
    <citation type="journal article" date="2012" name="Proc. Natl. Acad. Sci. U.S.A.">
        <title>N-terminal acetylome analyses and functional insights of the N-terminal acetyltransferase NatB.</title>
        <authorList>
            <person name="Van Damme P."/>
            <person name="Lasa M."/>
            <person name="Polevoda B."/>
            <person name="Gazquez C."/>
            <person name="Elosegui-Artola A."/>
            <person name="Kim D.S."/>
            <person name="De Juan-Pardo E."/>
            <person name="Demeyer K."/>
            <person name="Hole K."/>
            <person name="Larrea E."/>
            <person name="Timmerman E."/>
            <person name="Prieto J."/>
            <person name="Arnesen T."/>
            <person name="Sherman F."/>
            <person name="Gevaert K."/>
            <person name="Aldabe R."/>
        </authorList>
    </citation>
    <scope>IDENTIFICATION BY MASS SPECTROMETRY [LARGE SCALE ANALYSIS]</scope>
</reference>
<name>CUP9_YEAST</name>
<protein>
    <recommendedName>
        <fullName>Homeobox protein CUP9</fullName>
    </recommendedName>
</protein>
<keyword id="KW-0238">DNA-binding</keyword>
<keyword id="KW-0371">Homeobox</keyword>
<keyword id="KW-0539">Nucleus</keyword>
<keyword id="KW-1185">Reference proteome</keyword>
<feature type="chain" id="PRO_0000048859" description="Homeobox protein CUP9">
    <location>
        <begin position="1"/>
        <end position="306"/>
    </location>
</feature>
<feature type="DNA-binding region" description="Homeobox; TALE-type" evidence="1">
    <location>
        <begin position="162"/>
        <end position="224"/>
    </location>
</feature>
<feature type="region of interest" description="Disordered" evidence="2">
    <location>
        <begin position="75"/>
        <end position="123"/>
    </location>
</feature>
<feature type="compositionally biased region" description="Low complexity" evidence="2">
    <location>
        <begin position="79"/>
        <end position="96"/>
    </location>
</feature>
<feature type="compositionally biased region" description="Polar residues" evidence="2">
    <location>
        <begin position="97"/>
        <end position="110"/>
    </location>
</feature>